<keyword id="KW-0045">Antibiotic biosynthesis</keyword>
<keyword id="KW-0903">Direct protein sequencing</keyword>
<keyword id="KW-0596">Phosphopantetheine</keyword>
<keyword id="KW-0597">Phosphoprotein</keyword>
<keyword id="KW-0808">Transferase</keyword>
<protein>
    <recommendedName>
        <fullName evidence="7">Tetracenomycin polyketide synthase acyl carrier protein</fullName>
        <shortName evidence="7">ACP</shortName>
        <shortName evidence="7">TCM PKS ACP</shortName>
        <ecNumber evidence="5">2.3.1.235</ecNumber>
    </recommendedName>
</protein>
<reference key="1">
    <citation type="journal article" date="1989" name="EMBO J.">
        <title>Analysis of the nucleotide sequence of the Streptomyces glaucescens tcmI genes provides key information about the enzymology of polyketide antibiotic biosynthesis.</title>
        <authorList>
            <person name="Bibb M.J."/>
            <person name="Biro S."/>
            <person name="Motamedi H."/>
            <person name="Collins J.F."/>
            <person name="Hutchinson C.R."/>
        </authorList>
    </citation>
    <scope>NUCLEOTIDE SEQUENCE [GENOMIC DNA]</scope>
    <source>
        <strain>DSM 40716 / ETH 22794 / Tue 49</strain>
    </source>
</reference>
<reference key="2">
    <citation type="journal article" date="1992" name="J. Bacteriol.">
        <title>Nucleotide sequence of the tcmII-tcmIV region of the tetracenomycin C biosynthetic gene cluster of Streptomyces glaucescens and evidence that the tcmN gene encodes a multifunctional cyclase-dehydratase-O-methyl transferase.</title>
        <authorList>
            <person name="Summers R.G."/>
            <person name="Wendt-Pienkowski E."/>
            <person name="Motamedi H."/>
            <person name="Hutchinson C.R."/>
        </authorList>
    </citation>
    <scope>NUCLEOTIDE SEQUENCE [GENOMIC DNA] OF 47-83</scope>
</reference>
<reference key="3">
    <citation type="journal article" date="1992" name="J. Bacteriol.">
        <title>Purification and characterization of the acyl carrier protein of the Streptomyces glaucescens tetracenomycin C polyketide synthase.</title>
        <authorList>
            <person name="Shen B."/>
            <person name="Summers R.G."/>
            <person name="Gramajo H."/>
            <person name="Bibb M.J."/>
            <person name="Hutchinson C.R."/>
        </authorList>
    </citation>
    <scope>PROTEIN SEQUENCE OF 2-11</scope>
    <scope>FUNCTION</scope>
    <scope>COFACTOR</scope>
</reference>
<reference key="4">
    <citation type="journal article" date="1993" name="Science">
        <title>Enzymatic synthesis of a bacterial polyketide from acetyl and malonyl coenzyme A.</title>
        <authorList>
            <person name="Shen B."/>
            <person name="Hutchinson C.R."/>
        </authorList>
    </citation>
    <scope>FUNCTION</scope>
    <scope>SUBUNIT</scope>
    <source>
        <strain>DSM 40716 / ETH 22794 / Tue 49</strain>
    </source>
</reference>
<reference key="5">
    <citation type="journal article" date="1996" name="Proc. Natl. Acad. Sci. U.S.A.">
        <title>Deciphering the mechanism for the assembly of aromatic polyketides by a bacterial polyketide synthase.</title>
        <authorList>
            <person name="Shen B."/>
            <person name="Hutchinson C.R."/>
        </authorList>
    </citation>
    <scope>SUBUNIT</scope>
    <source>
        <strain>DSM 40716 / ETH 22794 / Tue 49</strain>
    </source>
</reference>
<reference key="6">
    <citation type="journal article" date="1998" name="Biochemistry">
        <title>Reconstitution of the iterative type II polyketide synthase for tetracenomycin F2 biosynthesis.</title>
        <authorList>
            <person name="Bao W."/>
            <person name="Wendt-Pienkowski E."/>
            <person name="Hutchinson C.R."/>
        </authorList>
    </citation>
    <scope>FUNCTION</scope>
    <scope>CATALYTIC ACTIVITY</scope>
    <scope>PATHWAY</scope>
    <source>
        <strain>DSM 40716 / ETH 22794 / Tue 49</strain>
    </source>
</reference>
<sequence>MPQIGLPRLVEIIRECAGDPDERDLDGDILDVTYQDLGYDSIALLEISAKLEQDLGVSIPGEELKTPRHTLHLVNTETAGEVA</sequence>
<dbReference type="EC" id="2.3.1.235" evidence="5"/>
<dbReference type="EMBL" id="X15312">
    <property type="protein sequence ID" value="CAB38456.1"/>
    <property type="molecule type" value="Genomic_DNA"/>
</dbReference>
<dbReference type="EMBL" id="M80674">
    <property type="protein sequence ID" value="AAA67517.1"/>
    <property type="molecule type" value="Genomic_DNA"/>
</dbReference>
<dbReference type="PIR" id="S05975">
    <property type="entry name" value="S05975"/>
</dbReference>
<dbReference type="RefSeq" id="WP_043504919.1">
    <property type="nucleotide sequence ID" value="NZ_CP009438.1"/>
</dbReference>
<dbReference type="SMR" id="P12884"/>
<dbReference type="STRING" id="1907.SGLAU_26365"/>
<dbReference type="eggNOG" id="COG0236">
    <property type="taxonomic scope" value="Bacteria"/>
</dbReference>
<dbReference type="OrthoDB" id="3537906at2"/>
<dbReference type="BioCyc" id="MetaCyc:MONOMER-18612"/>
<dbReference type="UniPathway" id="UPA00174"/>
<dbReference type="GO" id="GO:0016740">
    <property type="term" value="F:transferase activity"/>
    <property type="evidence" value="ECO:0007669"/>
    <property type="project" value="UniProtKB-KW"/>
</dbReference>
<dbReference type="GO" id="GO:0017000">
    <property type="term" value="P:antibiotic biosynthetic process"/>
    <property type="evidence" value="ECO:0007669"/>
    <property type="project" value="UniProtKB-KW"/>
</dbReference>
<dbReference type="Gene3D" id="1.10.1200.10">
    <property type="entry name" value="ACP-like"/>
    <property type="match status" value="1"/>
</dbReference>
<dbReference type="InterPro" id="IPR036736">
    <property type="entry name" value="ACP-like_sf"/>
</dbReference>
<dbReference type="InterPro" id="IPR009081">
    <property type="entry name" value="PP-bd_ACP"/>
</dbReference>
<dbReference type="InterPro" id="IPR006162">
    <property type="entry name" value="Ppantetheine_attach_site"/>
</dbReference>
<dbReference type="Pfam" id="PF00550">
    <property type="entry name" value="PP-binding"/>
    <property type="match status" value="1"/>
</dbReference>
<dbReference type="SUPFAM" id="SSF47336">
    <property type="entry name" value="ACP-like"/>
    <property type="match status" value="1"/>
</dbReference>
<dbReference type="PROSITE" id="PS50075">
    <property type="entry name" value="CARRIER"/>
    <property type="match status" value="1"/>
</dbReference>
<dbReference type="PROSITE" id="PS00012">
    <property type="entry name" value="PHOSPHOPANTETHEINE"/>
    <property type="match status" value="1"/>
</dbReference>
<comment type="function">
    <text evidence="2 3 5">Involved in the biosynthesis of tetracenomycin C (TCM C) (PubMed:9609708). Part of a type II polyketide synthase (PKS) that catalyzes the synthesis of tetracenomycin F2 (TCM F2), a precursor of TCM C, from malonyl-CoA (PubMed:8248801, PubMed:9609708). TcmM is an acyl carrier protein that serves as an acceptor of malonate from malonyl-CoA and acts as the tether for the substrates and intermediates of polyketide assembly (PubMed:1592832, PubMed:8248801). The malonyl CoA-acyl carrier protein transacylase FabD (MCT) is required to catalyze the transacylation between malonyl-CoA and TcmM, although a relatively slow spontaneous self-malonylation of TcmM also occurs in a reaction without the MCT (PubMed:9609708).</text>
</comment>
<comment type="catalytic activity">
    <reaction evidence="5">
        <text>10 malonyl-CoA + 8 H(+) = tetracenomycin F2 + 10 CO2 + 10 CoA + 2 H2O</text>
        <dbReference type="Rhea" id="RHEA:21348"/>
        <dbReference type="ChEBI" id="CHEBI:15377"/>
        <dbReference type="ChEBI" id="CHEBI:15378"/>
        <dbReference type="ChEBI" id="CHEBI:16526"/>
        <dbReference type="ChEBI" id="CHEBI:57287"/>
        <dbReference type="ChEBI" id="CHEBI:57384"/>
        <dbReference type="ChEBI" id="CHEBI:77982"/>
        <dbReference type="EC" id="2.3.1.235"/>
    </reaction>
    <physiologicalReaction direction="left-to-right" evidence="5">
        <dbReference type="Rhea" id="RHEA:21349"/>
    </physiologicalReaction>
</comment>
<comment type="cofactor">
    <cofactor evidence="2">
        <name>pantetheine 4'-phosphate</name>
        <dbReference type="ChEBI" id="CHEBI:47942"/>
    </cofactor>
</comment>
<comment type="pathway">
    <text evidence="5 8">Antibiotic biosynthesis; tetracenomycin C biosynthesis.</text>
</comment>
<comment type="subunit">
    <text evidence="3 4">The tetracenomycin polyketide synthase (TCM PKS) is composed of a ketosynthase complex (TcmKL), an acyl carrier protein (TcmM), a cyclase (TcmN) and a probable second cyclase (TcmJ).</text>
</comment>
<comment type="PTM">
    <text evidence="8">4'-phosphopantetheine is transferred from CoA to a specific serine of apo-ACP.</text>
</comment>
<accession>P12884</accession>
<organism>
    <name type="scientific">Streptomyces glaucescens</name>
    <dbReference type="NCBI Taxonomy" id="1907"/>
    <lineage>
        <taxon>Bacteria</taxon>
        <taxon>Bacillati</taxon>
        <taxon>Actinomycetota</taxon>
        <taxon>Actinomycetes</taxon>
        <taxon>Kitasatosporales</taxon>
        <taxon>Streptomycetaceae</taxon>
        <taxon>Streptomyces</taxon>
    </lineage>
</organism>
<proteinExistence type="evidence at protein level"/>
<feature type="initiator methionine" description="Removed" evidence="2">
    <location>
        <position position="1"/>
    </location>
</feature>
<feature type="chain" id="PRO_0000180252" description="Tetracenomycin polyketide synthase acyl carrier protein">
    <location>
        <begin position="2"/>
        <end position="83"/>
    </location>
</feature>
<feature type="domain" description="Carrier" evidence="1">
    <location>
        <begin position="3"/>
        <end position="83"/>
    </location>
</feature>
<feature type="modified residue" description="O-(pantetheine 4'-phosphoryl)serine" evidence="1">
    <location>
        <position position="41"/>
    </location>
</feature>
<gene>
    <name evidence="6" type="primary">tcmM</name>
</gene>
<name>TCMM_STRGA</name>
<evidence type="ECO:0000255" key="1">
    <source>
        <dbReference type="PROSITE-ProRule" id="PRU00258"/>
    </source>
</evidence>
<evidence type="ECO:0000269" key="2">
    <source>
    </source>
</evidence>
<evidence type="ECO:0000269" key="3">
    <source>
    </source>
</evidence>
<evidence type="ECO:0000269" key="4">
    <source>
    </source>
</evidence>
<evidence type="ECO:0000269" key="5">
    <source>
    </source>
</evidence>
<evidence type="ECO:0000303" key="6">
    <source>
    </source>
</evidence>
<evidence type="ECO:0000303" key="7">
    <source>
    </source>
</evidence>
<evidence type="ECO:0000305" key="8">
    <source>
    </source>
</evidence>